<keyword id="KW-0963">Cytoplasm</keyword>
<keyword id="KW-0460">Magnesium</keyword>
<keyword id="KW-0479">Metal-binding</keyword>
<keyword id="KW-0548">Nucleotidyltransferase</keyword>
<keyword id="KW-1185">Reference proteome</keyword>
<keyword id="KW-0694">RNA-binding</keyword>
<keyword id="KW-0808">Transferase</keyword>
<reference key="1">
    <citation type="journal article" date="2007" name="J. Bacteriol.">
        <title>Genome of the opportunistic pathogen Streptococcus sanguinis.</title>
        <authorList>
            <person name="Xu P."/>
            <person name="Alves J.M."/>
            <person name="Kitten T."/>
            <person name="Brown A."/>
            <person name="Chen Z."/>
            <person name="Ozaki L.S."/>
            <person name="Manque P."/>
            <person name="Ge X."/>
            <person name="Serrano M.G."/>
            <person name="Puiu D."/>
            <person name="Hendricks S."/>
            <person name="Wang Y."/>
            <person name="Chaplin M.D."/>
            <person name="Akan D."/>
            <person name="Paik S."/>
            <person name="Peterson D.L."/>
            <person name="Macrina F.L."/>
            <person name="Buck G.A."/>
        </authorList>
    </citation>
    <scope>NUCLEOTIDE SEQUENCE [LARGE SCALE GENOMIC DNA]</scope>
    <source>
        <strain>SK36</strain>
    </source>
</reference>
<gene>
    <name evidence="1" type="primary">pnp</name>
    <name type="ordered locus">SSA_2049</name>
</gene>
<sequence length="733" mass="80398">MTKQVFKTVFAGRELVVETGQVAKQANGSAVVRYGESTVLTAATMSKKMATGDFFPLQVNYEEKMYAAGKYPGGFNKREGRPSTDATLTARLIDRPIRPMFAEGFRNEVQVINTVLSYDEDASPQMAAMFGSSLALSISDIPFNGPIAGVQVGYVDGKFIINPSKEQKEVSLLELTVAGTKDAINMVESGAKELSEDIMLEALLKGHEAVKELIAFQEEIVAAVGKGKAEVELLHVDEELQAEIVAAYNSDLQKAVQVEEKLAREAATQAVKDQVTAVYEEKYADHEEFDRIMRDVAEILEQMEHAEVRRLITEDKVRPDGRKVDEIRPLDAEVDYLPRVHGSGLFTRGQTQALSVLTLAPMGETQIVDGLDPEYKKRFMHHYNFPQYSVGETGRYGAPGRREIGHGALGERALEQVLPSLEEFPYAIRLVAEVLESNGSSSQASICAGTLALMAGGVPIKAPVAGIAMGLISDGSNYTVLTDIQGLEDHFGDMDFKVAGTREGITALQMDIKIEGITAEILTEALAQAKKARFEILDLIEATIPAPRPELAPTAPKIDTIKIDVDKIKIVIGKGGETIDKIIAETGVKIDIDEEGNVSIYSSDQDAINRAKEIIAGLVREAKVDEVYHAKVVRIEKFGAFVNLFDKTDALVHISELAWTRTNNVEDVVQIGDEVDVKVIKIDAKGRVDASMKVLLPRPPKSDKPKHHHDKGHHPHKEYKGHKDHQESPKTEE</sequence>
<accession>A3CQG6</accession>
<name>PNP_STRSV</name>
<feature type="chain" id="PRO_0000329881" description="Polyribonucleotide nucleotidyltransferase">
    <location>
        <begin position="1"/>
        <end position="733"/>
    </location>
</feature>
<feature type="domain" description="KH" evidence="1">
    <location>
        <begin position="556"/>
        <end position="615"/>
    </location>
</feature>
<feature type="domain" description="S1 motif" evidence="1">
    <location>
        <begin position="625"/>
        <end position="693"/>
    </location>
</feature>
<feature type="region of interest" description="Disordered" evidence="2">
    <location>
        <begin position="691"/>
        <end position="733"/>
    </location>
</feature>
<feature type="compositionally biased region" description="Basic residues" evidence="2">
    <location>
        <begin position="704"/>
        <end position="723"/>
    </location>
</feature>
<feature type="compositionally biased region" description="Basic and acidic residues" evidence="2">
    <location>
        <begin position="724"/>
        <end position="733"/>
    </location>
</feature>
<feature type="binding site" evidence="1">
    <location>
        <position position="489"/>
    </location>
    <ligand>
        <name>Mg(2+)</name>
        <dbReference type="ChEBI" id="CHEBI:18420"/>
    </ligand>
</feature>
<feature type="binding site" evidence="1">
    <location>
        <position position="495"/>
    </location>
    <ligand>
        <name>Mg(2+)</name>
        <dbReference type="ChEBI" id="CHEBI:18420"/>
    </ligand>
</feature>
<evidence type="ECO:0000255" key="1">
    <source>
        <dbReference type="HAMAP-Rule" id="MF_01595"/>
    </source>
</evidence>
<evidence type="ECO:0000256" key="2">
    <source>
        <dbReference type="SAM" id="MobiDB-lite"/>
    </source>
</evidence>
<comment type="function">
    <text evidence="1">Involved in mRNA degradation. Catalyzes the phosphorolysis of single-stranded polyribonucleotides processively in the 3'- to 5'-direction.</text>
</comment>
<comment type="catalytic activity">
    <reaction evidence="1">
        <text>RNA(n+1) + phosphate = RNA(n) + a ribonucleoside 5'-diphosphate</text>
        <dbReference type="Rhea" id="RHEA:22096"/>
        <dbReference type="Rhea" id="RHEA-COMP:14527"/>
        <dbReference type="Rhea" id="RHEA-COMP:17342"/>
        <dbReference type="ChEBI" id="CHEBI:43474"/>
        <dbReference type="ChEBI" id="CHEBI:57930"/>
        <dbReference type="ChEBI" id="CHEBI:140395"/>
        <dbReference type="EC" id="2.7.7.8"/>
    </reaction>
</comment>
<comment type="cofactor">
    <cofactor evidence="1">
        <name>Mg(2+)</name>
        <dbReference type="ChEBI" id="CHEBI:18420"/>
    </cofactor>
</comment>
<comment type="subcellular location">
    <subcellularLocation>
        <location evidence="1">Cytoplasm</location>
    </subcellularLocation>
</comment>
<comment type="similarity">
    <text evidence="1">Belongs to the polyribonucleotide nucleotidyltransferase family.</text>
</comment>
<dbReference type="EC" id="2.7.7.8" evidence="1"/>
<dbReference type="EMBL" id="CP000387">
    <property type="protein sequence ID" value="ABN45421.1"/>
    <property type="molecule type" value="Genomic_DNA"/>
</dbReference>
<dbReference type="RefSeq" id="WP_011837516.1">
    <property type="nucleotide sequence ID" value="NC_009009.1"/>
</dbReference>
<dbReference type="RefSeq" id="YP_001035971.1">
    <property type="nucleotide sequence ID" value="NC_009009.1"/>
</dbReference>
<dbReference type="SMR" id="A3CQG6"/>
<dbReference type="STRING" id="388919.SSA_2049"/>
<dbReference type="KEGG" id="ssa:SSA_2049"/>
<dbReference type="PATRIC" id="fig|388919.9.peg.1944"/>
<dbReference type="eggNOG" id="COG1185">
    <property type="taxonomic scope" value="Bacteria"/>
</dbReference>
<dbReference type="HOGENOM" id="CLU_004217_2_2_9"/>
<dbReference type="OrthoDB" id="9804305at2"/>
<dbReference type="Proteomes" id="UP000002148">
    <property type="component" value="Chromosome"/>
</dbReference>
<dbReference type="GO" id="GO:0005829">
    <property type="term" value="C:cytosol"/>
    <property type="evidence" value="ECO:0007669"/>
    <property type="project" value="TreeGrafter"/>
</dbReference>
<dbReference type="GO" id="GO:0000175">
    <property type="term" value="F:3'-5'-RNA exonuclease activity"/>
    <property type="evidence" value="ECO:0007669"/>
    <property type="project" value="TreeGrafter"/>
</dbReference>
<dbReference type="GO" id="GO:0000287">
    <property type="term" value="F:magnesium ion binding"/>
    <property type="evidence" value="ECO:0007669"/>
    <property type="project" value="UniProtKB-UniRule"/>
</dbReference>
<dbReference type="GO" id="GO:0004654">
    <property type="term" value="F:polyribonucleotide nucleotidyltransferase activity"/>
    <property type="evidence" value="ECO:0007669"/>
    <property type="project" value="UniProtKB-UniRule"/>
</dbReference>
<dbReference type="GO" id="GO:0003723">
    <property type="term" value="F:RNA binding"/>
    <property type="evidence" value="ECO:0007669"/>
    <property type="project" value="UniProtKB-UniRule"/>
</dbReference>
<dbReference type="GO" id="GO:0006402">
    <property type="term" value="P:mRNA catabolic process"/>
    <property type="evidence" value="ECO:0007669"/>
    <property type="project" value="UniProtKB-UniRule"/>
</dbReference>
<dbReference type="GO" id="GO:0006396">
    <property type="term" value="P:RNA processing"/>
    <property type="evidence" value="ECO:0007669"/>
    <property type="project" value="InterPro"/>
</dbReference>
<dbReference type="CDD" id="cd02393">
    <property type="entry name" value="KH-I_PNPase"/>
    <property type="match status" value="1"/>
</dbReference>
<dbReference type="CDD" id="cd11363">
    <property type="entry name" value="RNase_PH_PNPase_1"/>
    <property type="match status" value="1"/>
</dbReference>
<dbReference type="CDD" id="cd11364">
    <property type="entry name" value="RNase_PH_PNPase_2"/>
    <property type="match status" value="1"/>
</dbReference>
<dbReference type="FunFam" id="2.40.50.140:FF:000023">
    <property type="entry name" value="Polyribonucleotide nucleotidyltransferase"/>
    <property type="match status" value="1"/>
</dbReference>
<dbReference type="FunFam" id="3.30.1370.10:FF:000001">
    <property type="entry name" value="Polyribonucleotide nucleotidyltransferase"/>
    <property type="match status" value="1"/>
</dbReference>
<dbReference type="FunFam" id="3.30.230.70:FF:000001">
    <property type="entry name" value="Polyribonucleotide nucleotidyltransferase"/>
    <property type="match status" value="1"/>
</dbReference>
<dbReference type="FunFam" id="3.30.230.70:FF:000002">
    <property type="entry name" value="Polyribonucleotide nucleotidyltransferase"/>
    <property type="match status" value="1"/>
</dbReference>
<dbReference type="Gene3D" id="3.30.230.70">
    <property type="entry name" value="GHMP Kinase, N-terminal domain"/>
    <property type="match status" value="2"/>
</dbReference>
<dbReference type="Gene3D" id="3.30.1370.10">
    <property type="entry name" value="K Homology domain, type 1"/>
    <property type="match status" value="1"/>
</dbReference>
<dbReference type="Gene3D" id="2.40.50.140">
    <property type="entry name" value="Nucleic acid-binding proteins"/>
    <property type="match status" value="1"/>
</dbReference>
<dbReference type="HAMAP" id="MF_01595">
    <property type="entry name" value="PNPase"/>
    <property type="match status" value="1"/>
</dbReference>
<dbReference type="InterPro" id="IPR001247">
    <property type="entry name" value="ExoRNase_PH_dom1"/>
</dbReference>
<dbReference type="InterPro" id="IPR015847">
    <property type="entry name" value="ExoRNase_PH_dom2"/>
</dbReference>
<dbReference type="InterPro" id="IPR036345">
    <property type="entry name" value="ExoRNase_PH_dom2_sf"/>
</dbReference>
<dbReference type="InterPro" id="IPR004087">
    <property type="entry name" value="KH_dom"/>
</dbReference>
<dbReference type="InterPro" id="IPR004088">
    <property type="entry name" value="KH_dom_type_1"/>
</dbReference>
<dbReference type="InterPro" id="IPR036612">
    <property type="entry name" value="KH_dom_type_1_sf"/>
</dbReference>
<dbReference type="InterPro" id="IPR012340">
    <property type="entry name" value="NA-bd_OB-fold"/>
</dbReference>
<dbReference type="InterPro" id="IPR012162">
    <property type="entry name" value="PNPase"/>
</dbReference>
<dbReference type="InterPro" id="IPR027408">
    <property type="entry name" value="PNPase/RNase_PH_dom_sf"/>
</dbReference>
<dbReference type="InterPro" id="IPR015848">
    <property type="entry name" value="PNPase_PH_RNA-bd_bac/org-type"/>
</dbReference>
<dbReference type="InterPro" id="IPR036456">
    <property type="entry name" value="PNPase_PH_RNA-bd_sf"/>
</dbReference>
<dbReference type="InterPro" id="IPR020568">
    <property type="entry name" value="Ribosomal_Su5_D2-typ_SF"/>
</dbReference>
<dbReference type="InterPro" id="IPR003029">
    <property type="entry name" value="S1_domain"/>
</dbReference>
<dbReference type="NCBIfam" id="TIGR03591">
    <property type="entry name" value="polynuc_phos"/>
    <property type="match status" value="1"/>
</dbReference>
<dbReference type="NCBIfam" id="NF008805">
    <property type="entry name" value="PRK11824.1"/>
    <property type="match status" value="1"/>
</dbReference>
<dbReference type="PANTHER" id="PTHR11252">
    <property type="entry name" value="POLYRIBONUCLEOTIDE NUCLEOTIDYLTRANSFERASE"/>
    <property type="match status" value="1"/>
</dbReference>
<dbReference type="PANTHER" id="PTHR11252:SF0">
    <property type="entry name" value="POLYRIBONUCLEOTIDE NUCLEOTIDYLTRANSFERASE 1, MITOCHONDRIAL"/>
    <property type="match status" value="1"/>
</dbReference>
<dbReference type="Pfam" id="PF00013">
    <property type="entry name" value="KH_1"/>
    <property type="match status" value="1"/>
</dbReference>
<dbReference type="Pfam" id="PF03726">
    <property type="entry name" value="PNPase"/>
    <property type="match status" value="1"/>
</dbReference>
<dbReference type="Pfam" id="PF01138">
    <property type="entry name" value="RNase_PH"/>
    <property type="match status" value="2"/>
</dbReference>
<dbReference type="Pfam" id="PF03725">
    <property type="entry name" value="RNase_PH_C"/>
    <property type="match status" value="2"/>
</dbReference>
<dbReference type="Pfam" id="PF00575">
    <property type="entry name" value="S1"/>
    <property type="match status" value="1"/>
</dbReference>
<dbReference type="PIRSF" id="PIRSF005499">
    <property type="entry name" value="PNPase"/>
    <property type="match status" value="1"/>
</dbReference>
<dbReference type="SMART" id="SM00322">
    <property type="entry name" value="KH"/>
    <property type="match status" value="1"/>
</dbReference>
<dbReference type="SMART" id="SM00316">
    <property type="entry name" value="S1"/>
    <property type="match status" value="1"/>
</dbReference>
<dbReference type="SUPFAM" id="SSF54791">
    <property type="entry name" value="Eukaryotic type KH-domain (KH-domain type I)"/>
    <property type="match status" value="1"/>
</dbReference>
<dbReference type="SUPFAM" id="SSF50249">
    <property type="entry name" value="Nucleic acid-binding proteins"/>
    <property type="match status" value="1"/>
</dbReference>
<dbReference type="SUPFAM" id="SSF46915">
    <property type="entry name" value="Polynucleotide phosphorylase/guanosine pentaphosphate synthase (PNPase/GPSI), domain 3"/>
    <property type="match status" value="1"/>
</dbReference>
<dbReference type="SUPFAM" id="SSF55666">
    <property type="entry name" value="Ribonuclease PH domain 2-like"/>
    <property type="match status" value="2"/>
</dbReference>
<dbReference type="SUPFAM" id="SSF54211">
    <property type="entry name" value="Ribosomal protein S5 domain 2-like"/>
    <property type="match status" value="2"/>
</dbReference>
<dbReference type="PROSITE" id="PS50084">
    <property type="entry name" value="KH_TYPE_1"/>
    <property type="match status" value="1"/>
</dbReference>
<dbReference type="PROSITE" id="PS50126">
    <property type="entry name" value="S1"/>
    <property type="match status" value="1"/>
</dbReference>
<organism>
    <name type="scientific">Streptococcus sanguinis (strain SK36)</name>
    <dbReference type="NCBI Taxonomy" id="388919"/>
    <lineage>
        <taxon>Bacteria</taxon>
        <taxon>Bacillati</taxon>
        <taxon>Bacillota</taxon>
        <taxon>Bacilli</taxon>
        <taxon>Lactobacillales</taxon>
        <taxon>Streptococcaceae</taxon>
        <taxon>Streptococcus</taxon>
    </lineage>
</organism>
<protein>
    <recommendedName>
        <fullName evidence="1">Polyribonucleotide nucleotidyltransferase</fullName>
        <ecNumber evidence="1">2.7.7.8</ecNumber>
    </recommendedName>
    <alternativeName>
        <fullName evidence="1">Polynucleotide phosphorylase</fullName>
        <shortName evidence="1">PNPase</shortName>
    </alternativeName>
</protein>
<proteinExistence type="inferred from homology"/>